<proteinExistence type="inferred from homology"/>
<keyword id="KW-0131">Cell cycle</keyword>
<keyword id="KW-0132">Cell division</keyword>
<keyword id="KW-0238">DNA-binding</keyword>
<evidence type="ECO:0000255" key="1">
    <source>
        <dbReference type="HAMAP-Rule" id="MF_01580"/>
    </source>
</evidence>
<sequence>MMKPLRQQNRQIISYIPRVEPAPPEHAIKMDTFRDVWILRGKYVAFVLTGESFQRSPAFSVPESAQRWANQVRQENEIAD</sequence>
<reference key="1">
    <citation type="journal article" date="2009" name="PLoS ONE">
        <title>Salmonella paratyphi C: genetic divergence from Salmonella choleraesuis and pathogenic convergence with Salmonella typhi.</title>
        <authorList>
            <person name="Liu W.-Q."/>
            <person name="Feng Y."/>
            <person name="Wang Y."/>
            <person name="Zou Q.-H."/>
            <person name="Chen F."/>
            <person name="Guo J.-T."/>
            <person name="Peng Y.-H."/>
            <person name="Jin Y."/>
            <person name="Li Y.-G."/>
            <person name="Hu S.-N."/>
            <person name="Johnston R.N."/>
            <person name="Liu G.-R."/>
            <person name="Liu S.-L."/>
        </authorList>
    </citation>
    <scope>NUCLEOTIDE SEQUENCE [LARGE SCALE GENOMIC DNA]</scope>
    <source>
        <strain>RKS4594</strain>
    </source>
</reference>
<accession>C0Q657</accession>
<comment type="function">
    <text evidence="1">Activates the cell division inhibited by chromosomal DNA over-replication.</text>
</comment>
<comment type="similarity">
    <text evidence="1">Belongs to the CedA family.</text>
</comment>
<gene>
    <name evidence="1" type="primary">cedA</name>
    <name type="ordered locus">SPC_2411</name>
</gene>
<organism>
    <name type="scientific">Salmonella paratyphi C (strain RKS4594)</name>
    <dbReference type="NCBI Taxonomy" id="476213"/>
    <lineage>
        <taxon>Bacteria</taxon>
        <taxon>Pseudomonadati</taxon>
        <taxon>Pseudomonadota</taxon>
        <taxon>Gammaproteobacteria</taxon>
        <taxon>Enterobacterales</taxon>
        <taxon>Enterobacteriaceae</taxon>
        <taxon>Salmonella</taxon>
    </lineage>
</organism>
<feature type="chain" id="PRO_1000185648" description="Cell division activator CedA">
    <location>
        <begin position="1"/>
        <end position="80"/>
    </location>
</feature>
<name>CEDA_SALPC</name>
<dbReference type="EMBL" id="CP000857">
    <property type="protein sequence ID" value="ACN46523.1"/>
    <property type="molecule type" value="Genomic_DNA"/>
</dbReference>
<dbReference type="RefSeq" id="WP_000977510.1">
    <property type="nucleotide sequence ID" value="NC_012125.1"/>
</dbReference>
<dbReference type="SMR" id="C0Q657"/>
<dbReference type="KEGG" id="sei:SPC_2411"/>
<dbReference type="HOGENOM" id="CLU_167445_0_0_6"/>
<dbReference type="Proteomes" id="UP000001599">
    <property type="component" value="Chromosome"/>
</dbReference>
<dbReference type="GO" id="GO:0003677">
    <property type="term" value="F:DNA binding"/>
    <property type="evidence" value="ECO:0007669"/>
    <property type="project" value="UniProtKB-UniRule"/>
</dbReference>
<dbReference type="GO" id="GO:0051301">
    <property type="term" value="P:cell division"/>
    <property type="evidence" value="ECO:0007669"/>
    <property type="project" value="UniProtKB-UniRule"/>
</dbReference>
<dbReference type="Gene3D" id="3.30.730.20">
    <property type="entry name" value="Cell division activator CedA"/>
    <property type="match status" value="1"/>
</dbReference>
<dbReference type="HAMAP" id="MF_01580">
    <property type="entry name" value="CedA"/>
    <property type="match status" value="1"/>
</dbReference>
<dbReference type="InterPro" id="IPR038463">
    <property type="entry name" value="CedA-like_sf"/>
</dbReference>
<dbReference type="InterPro" id="IPR019666">
    <property type="entry name" value="Cell_div_activator_CedA"/>
</dbReference>
<dbReference type="NCBIfam" id="NF007510">
    <property type="entry name" value="PRK10113.1"/>
    <property type="match status" value="1"/>
</dbReference>
<dbReference type="Pfam" id="PF10729">
    <property type="entry name" value="CedA"/>
    <property type="match status" value="1"/>
</dbReference>
<protein>
    <recommendedName>
        <fullName evidence="1">Cell division activator CedA</fullName>
    </recommendedName>
</protein>